<protein>
    <recommendedName>
        <fullName>NADH-quinone oxidoreductase subunit L</fullName>
        <ecNumber>7.1.1.-</ecNumber>
    </recommendedName>
    <alternativeName>
        <fullName>NADH dehydrogenase I subunit L</fullName>
    </alternativeName>
    <alternativeName>
        <fullName>NDH-1 subunit L</fullName>
    </alternativeName>
    <alternativeName>
        <fullName>NUO12</fullName>
    </alternativeName>
</protein>
<proteinExistence type="evidence at protein level"/>
<feature type="chain" id="PRO_0000118213" description="NADH-quinone oxidoreductase subunit L">
    <location>
        <begin position="1"/>
        <end position="613"/>
    </location>
</feature>
<feature type="topological domain" description="Periplasmic" evidence="1">
    <location>
        <begin position="1"/>
        <end position="6"/>
    </location>
</feature>
<feature type="transmembrane region" description="Helical" evidence="1">
    <location>
        <begin position="7"/>
        <end position="23"/>
    </location>
</feature>
<feature type="topological domain" description="Cytoplasmic" evidence="1">
    <location>
        <begin position="24"/>
        <end position="31"/>
    </location>
</feature>
<feature type="transmembrane region" description="Helical" evidence="1">
    <location>
        <begin position="32"/>
        <end position="52"/>
    </location>
</feature>
<feature type="topological domain" description="Periplasmic" evidence="1">
    <location>
        <begin position="53"/>
        <end position="74"/>
    </location>
</feature>
<feature type="transmembrane region" description="Helical" evidence="1">
    <location>
        <begin position="75"/>
        <end position="99"/>
    </location>
</feature>
<feature type="topological domain" description="Cytoplasmic" evidence="1">
    <location>
        <begin position="100"/>
        <end position="115"/>
    </location>
</feature>
<feature type="transmembrane region" description="Helical" evidence="1">
    <location>
        <begin position="116"/>
        <end position="133"/>
    </location>
</feature>
<feature type="topological domain" description="Periplasmic" evidence="1">
    <location>
        <begin position="134"/>
        <end position="210"/>
    </location>
</feature>
<feature type="transmembrane region" description="Helical" evidence="1">
    <location>
        <begin position="211"/>
        <end position="228"/>
    </location>
</feature>
<feature type="topological domain" description="Cytoplasmic" evidence="1">
    <location>
        <begin position="229"/>
        <end position="248"/>
    </location>
</feature>
<feature type="transmembrane region" description="Helical" evidence="1">
    <location>
        <begin position="249"/>
        <end position="267"/>
    </location>
</feature>
<feature type="topological domain" description="Periplasmic" evidence="1">
    <location>
        <begin position="268"/>
        <end position="281"/>
    </location>
</feature>
<feature type="transmembrane region" description="Helical" evidence="1">
    <location>
        <begin position="282"/>
        <end position="300"/>
    </location>
</feature>
<feature type="topological domain" description="Cytoplasmic" evidence="1">
    <location>
        <begin position="301"/>
        <end position="306"/>
    </location>
</feature>
<feature type="transmembrane region" description="Helical" evidence="1">
    <location>
        <begin position="307"/>
        <end position="325"/>
    </location>
</feature>
<feature type="topological domain" description="Periplasmic" evidence="1">
    <location>
        <begin position="326"/>
        <end position="338"/>
    </location>
</feature>
<feature type="transmembrane region" description="Helical" evidence="1">
    <location>
        <begin position="339"/>
        <end position="356"/>
    </location>
</feature>
<feature type="topological domain" description="Cytoplasmic" evidence="1">
    <location>
        <begin position="357"/>
        <end position="373"/>
    </location>
</feature>
<feature type="transmembrane region" description="Helical" evidence="1">
    <location>
        <begin position="374"/>
        <end position="397"/>
    </location>
</feature>
<feature type="topological domain" description="Periplasmic" evidence="1">
    <location>
        <begin position="398"/>
        <end position="413"/>
    </location>
</feature>
<feature type="transmembrane region" description="Helical" evidence="1">
    <location>
        <begin position="414"/>
        <end position="437"/>
    </location>
</feature>
<feature type="topological domain" description="Cytoplasmic" evidence="1">
    <location>
        <begin position="438"/>
        <end position="454"/>
    </location>
</feature>
<feature type="transmembrane region" description="Helical" evidence="1">
    <location>
        <begin position="455"/>
        <end position="472"/>
    </location>
</feature>
<feature type="topological domain" description="Periplasmic" evidence="1">
    <location>
        <begin position="473"/>
        <end position="494"/>
    </location>
</feature>
<feature type="transmembrane region" description="Helical" evidence="1">
    <location>
        <begin position="495"/>
        <end position="514"/>
    </location>
</feature>
<feature type="topological domain" description="Cytoplasmic" evidence="1">
    <location>
        <begin position="515"/>
        <end position="589"/>
    </location>
</feature>
<feature type="transmembrane region" description="Helical" evidence="1">
    <location>
        <begin position="590"/>
        <end position="607"/>
    </location>
</feature>
<feature type="topological domain" description="Periplasmic" evidence="1">
    <location>
        <begin position="608"/>
        <end position="613"/>
    </location>
</feature>
<feature type="sequence conflict" description="In Ref. 1; CAA48371." evidence="2" ref="1">
    <original>G</original>
    <variation>A</variation>
    <location>
        <position position="39"/>
    </location>
</feature>
<feature type="sequence conflict" description="In Ref. 1; CAA48371." evidence="2" ref="1">
    <original>FIGVDFFANGEQ</original>
    <variation>LSALISSLTASK</variation>
    <location>
        <begin position="47"/>
        <end position="58"/>
    </location>
</feature>
<feature type="sequence conflict" description="In Ref. 1; CAA48371." evidence="2" ref="1">
    <original>A</original>
    <variation>R</variation>
    <location>
        <position position="182"/>
    </location>
</feature>
<feature type="sequence conflict" description="In Ref. 1; CAA48371." evidence="2" ref="1">
    <original>F</original>
    <variation>L</variation>
    <location>
        <position position="208"/>
    </location>
</feature>
<feature type="turn" evidence="5">
    <location>
        <begin position="2"/>
        <end position="5"/>
    </location>
</feature>
<feature type="helix" evidence="5">
    <location>
        <begin position="6"/>
        <end position="21"/>
    </location>
</feature>
<feature type="helix" evidence="5">
    <location>
        <begin position="27"/>
        <end position="54"/>
    </location>
</feature>
<feature type="turn" evidence="4">
    <location>
        <begin position="55"/>
        <end position="57"/>
    </location>
</feature>
<feature type="strand" evidence="5">
    <location>
        <begin position="60"/>
        <end position="70"/>
    </location>
</feature>
<feature type="strand" evidence="5">
    <location>
        <begin position="73"/>
        <end position="81"/>
    </location>
</feature>
<feature type="helix" evidence="5">
    <location>
        <begin position="83"/>
        <end position="106"/>
    </location>
</feature>
<feature type="turn" evidence="5">
    <location>
        <begin position="107"/>
        <end position="109"/>
    </location>
</feature>
<feature type="helix" evidence="5">
    <location>
        <begin position="113"/>
        <end position="132"/>
    </location>
</feature>
<feature type="strand" evidence="5">
    <location>
        <begin position="133"/>
        <end position="135"/>
    </location>
</feature>
<feature type="helix" evidence="5">
    <location>
        <begin position="136"/>
        <end position="154"/>
    </location>
</feature>
<feature type="helix" evidence="5">
    <location>
        <begin position="161"/>
        <end position="192"/>
    </location>
</feature>
<feature type="helix" evidence="5">
    <location>
        <begin position="197"/>
        <end position="207"/>
    </location>
</feature>
<feature type="strand" evidence="6">
    <location>
        <begin position="208"/>
        <end position="210"/>
    </location>
</feature>
<feature type="helix" evidence="5">
    <location>
        <begin position="213"/>
        <end position="230"/>
    </location>
</feature>
<feature type="strand" evidence="3">
    <location>
        <begin position="233"/>
        <end position="235"/>
    </location>
</feature>
<feature type="helix" evidence="5">
    <location>
        <begin position="239"/>
        <end position="242"/>
    </location>
</feature>
<feature type="helix" evidence="5">
    <location>
        <begin position="247"/>
        <end position="254"/>
    </location>
</feature>
<feature type="helix" evidence="5">
    <location>
        <begin position="258"/>
        <end position="260"/>
    </location>
</feature>
<feature type="helix" evidence="5">
    <location>
        <begin position="261"/>
        <end position="268"/>
    </location>
</feature>
<feature type="helix" evidence="5">
    <location>
        <begin position="270"/>
        <end position="274"/>
    </location>
</feature>
<feature type="helix" evidence="5">
    <location>
        <begin position="277"/>
        <end position="299"/>
    </location>
</feature>
<feature type="helix" evidence="5">
    <location>
        <begin position="304"/>
        <end position="324"/>
    </location>
</feature>
<feature type="helix" evidence="5">
    <location>
        <begin position="328"/>
        <end position="355"/>
    </location>
</feature>
<feature type="strand" evidence="5">
    <location>
        <begin position="356"/>
        <end position="359"/>
    </location>
</feature>
<feature type="turn" evidence="5">
    <location>
        <begin position="362"/>
        <end position="364"/>
    </location>
</feature>
<feature type="turn" evidence="5">
    <location>
        <begin position="369"/>
        <end position="371"/>
    </location>
</feature>
<feature type="helix" evidence="5">
    <location>
        <begin position="373"/>
        <end position="386"/>
    </location>
</feature>
<feature type="turn" evidence="5">
    <location>
        <begin position="390"/>
        <end position="392"/>
    </location>
</feature>
<feature type="helix" evidence="5">
    <location>
        <begin position="394"/>
        <end position="408"/>
    </location>
</feature>
<feature type="helix" evidence="5">
    <location>
        <begin position="412"/>
        <end position="437"/>
    </location>
</feature>
<feature type="helix" evidence="5">
    <location>
        <begin position="454"/>
        <end position="463"/>
    </location>
</feature>
<feature type="helix" evidence="5">
    <location>
        <begin position="466"/>
        <end position="470"/>
    </location>
</feature>
<feature type="turn" evidence="5">
    <location>
        <begin position="476"/>
        <end position="478"/>
    </location>
</feature>
<feature type="helix" evidence="5">
    <location>
        <begin position="487"/>
        <end position="512"/>
    </location>
</feature>
<feature type="strand" evidence="7">
    <location>
        <begin position="513"/>
        <end position="515"/>
    </location>
</feature>
<feature type="helix" evidence="5">
    <location>
        <begin position="517"/>
        <end position="524"/>
    </location>
</feature>
<feature type="helix" evidence="5">
    <location>
        <begin position="526"/>
        <end position="536"/>
    </location>
</feature>
<feature type="helix" evidence="5">
    <location>
        <begin position="538"/>
        <end position="540"/>
    </location>
</feature>
<feature type="helix" evidence="5">
    <location>
        <begin position="541"/>
        <end position="548"/>
    </location>
</feature>
<feature type="helix" evidence="5">
    <location>
        <begin position="550"/>
        <end position="560"/>
    </location>
</feature>
<feature type="helix" evidence="5">
    <location>
        <begin position="564"/>
        <end position="583"/>
    </location>
</feature>
<feature type="helix" evidence="5">
    <location>
        <begin position="584"/>
        <end position="586"/>
    </location>
</feature>
<feature type="helix" evidence="5">
    <location>
        <begin position="591"/>
        <end position="611"/>
    </location>
</feature>
<keyword id="KW-0002">3D-structure</keyword>
<keyword id="KW-0997">Cell inner membrane</keyword>
<keyword id="KW-1003">Cell membrane</keyword>
<keyword id="KW-0472">Membrane</keyword>
<keyword id="KW-0520">NAD</keyword>
<keyword id="KW-0874">Quinone</keyword>
<keyword id="KW-1185">Reference proteome</keyword>
<keyword id="KW-1278">Translocase</keyword>
<keyword id="KW-0812">Transmembrane</keyword>
<keyword id="KW-1133">Transmembrane helix</keyword>
<keyword id="KW-0830">Ubiquinone</keyword>
<gene>
    <name type="primary">nuoL</name>
    <name type="ordered locus">b2278</name>
    <name type="ordered locus">JW2273</name>
</gene>
<comment type="function">
    <text>NDH-1 shuttles electrons from NADH, via FMN and iron-sulfur (Fe-S) centers, to quinones in the respiratory chain. The immediate electron acceptor for the enzyme in this species is believed to be ubiquinone. Couples the redox reaction to proton translocation (for every two electrons transferred, four hydrogen ions are translocated across the cytoplasmic membrane), and thus conserves the redox energy in a proton gradient.</text>
</comment>
<comment type="catalytic activity">
    <reaction>
        <text>a quinone + NADH + 5 H(+)(in) = a quinol + NAD(+) + 4 H(+)(out)</text>
        <dbReference type="Rhea" id="RHEA:57888"/>
        <dbReference type="ChEBI" id="CHEBI:15378"/>
        <dbReference type="ChEBI" id="CHEBI:24646"/>
        <dbReference type="ChEBI" id="CHEBI:57540"/>
        <dbReference type="ChEBI" id="CHEBI:57945"/>
        <dbReference type="ChEBI" id="CHEBI:132124"/>
    </reaction>
</comment>
<comment type="subunit">
    <text>Composed of 13 different subunits. Subunits NuoA, H, J, K, L, M, N constitute the membrane sector of the complex.</text>
</comment>
<comment type="subcellular location">
    <subcellularLocation>
        <location>Cell inner membrane</location>
        <topology>Multi-pass membrane protein</topology>
    </subcellularLocation>
</comment>
<comment type="similarity">
    <text evidence="2">Belongs to the complex I subunit 5 family.</text>
</comment>
<organism>
    <name type="scientific">Escherichia coli (strain K12)</name>
    <dbReference type="NCBI Taxonomy" id="83333"/>
    <lineage>
        <taxon>Bacteria</taxon>
        <taxon>Pseudomonadati</taxon>
        <taxon>Pseudomonadota</taxon>
        <taxon>Gammaproteobacteria</taxon>
        <taxon>Enterobacterales</taxon>
        <taxon>Enterobacteriaceae</taxon>
        <taxon>Escherichia</taxon>
    </lineage>
</organism>
<accession>P33607</accession>
<accession>P78254</accession>
<evidence type="ECO:0000255" key="1"/>
<evidence type="ECO:0000305" key="2"/>
<evidence type="ECO:0007829" key="3">
    <source>
        <dbReference type="PDB" id="7P61"/>
    </source>
</evidence>
<evidence type="ECO:0007829" key="4">
    <source>
        <dbReference type="PDB" id="7Z7S"/>
    </source>
</evidence>
<evidence type="ECO:0007829" key="5">
    <source>
        <dbReference type="PDB" id="7Z7V"/>
    </source>
</evidence>
<evidence type="ECO:0007829" key="6">
    <source>
        <dbReference type="PDB" id="7Z80"/>
    </source>
</evidence>
<evidence type="ECO:0007829" key="7">
    <source>
        <dbReference type="PDB" id="7ZCI"/>
    </source>
</evidence>
<dbReference type="EC" id="7.1.1.-"/>
<dbReference type="EMBL" id="X68301">
    <property type="protein sequence ID" value="CAA48371.1"/>
    <property type="molecule type" value="Genomic_DNA"/>
</dbReference>
<dbReference type="EMBL" id="U00096">
    <property type="protein sequence ID" value="AAC75338.1"/>
    <property type="molecule type" value="Genomic_DNA"/>
</dbReference>
<dbReference type="EMBL" id="AP009048">
    <property type="protein sequence ID" value="BAA16106.1"/>
    <property type="molecule type" value="Genomic_DNA"/>
</dbReference>
<dbReference type="PIR" id="D64999">
    <property type="entry name" value="D64999"/>
</dbReference>
<dbReference type="RefSeq" id="NP_416781.1">
    <property type="nucleotide sequence ID" value="NC_000913.3"/>
</dbReference>
<dbReference type="RefSeq" id="WP_001056643.1">
    <property type="nucleotide sequence ID" value="NZ_LN832404.1"/>
</dbReference>
<dbReference type="PDB" id="7NYH">
    <property type="method" value="EM"/>
    <property type="resolution" value="3.60 A"/>
    <property type="chains" value="L=1-613"/>
</dbReference>
<dbReference type="PDB" id="7NYR">
    <property type="method" value="EM"/>
    <property type="resolution" value="3.30 A"/>
    <property type="chains" value="L=1-613"/>
</dbReference>
<dbReference type="PDB" id="7NYU">
    <property type="method" value="EM"/>
    <property type="resolution" value="3.80 A"/>
    <property type="chains" value="L=1-613"/>
</dbReference>
<dbReference type="PDB" id="7NYV">
    <property type="method" value="EM"/>
    <property type="resolution" value="3.70 A"/>
    <property type="chains" value="L=1-613"/>
</dbReference>
<dbReference type="PDB" id="7P61">
    <property type="method" value="EM"/>
    <property type="resolution" value="3.20 A"/>
    <property type="chains" value="L=1-613"/>
</dbReference>
<dbReference type="PDB" id="7P62">
    <property type="method" value="EM"/>
    <property type="resolution" value="3.60 A"/>
    <property type="chains" value="L=1-613"/>
</dbReference>
<dbReference type="PDB" id="7P63">
    <property type="method" value="EM"/>
    <property type="resolution" value="3.40 A"/>
    <property type="chains" value="L=1-613"/>
</dbReference>
<dbReference type="PDB" id="7P64">
    <property type="method" value="EM"/>
    <property type="resolution" value="2.50 A"/>
    <property type="chains" value="L=1-613"/>
</dbReference>
<dbReference type="PDB" id="7P69">
    <property type="method" value="EM"/>
    <property type="resolution" value="3.00 A"/>
    <property type="chains" value="L=1-613"/>
</dbReference>
<dbReference type="PDB" id="7P7C">
    <property type="method" value="EM"/>
    <property type="resolution" value="2.40 A"/>
    <property type="chains" value="L=1-613"/>
</dbReference>
<dbReference type="PDB" id="7P7E">
    <property type="method" value="EM"/>
    <property type="resolution" value="2.70 A"/>
    <property type="chains" value="L=1-613"/>
</dbReference>
<dbReference type="PDB" id="7P7J">
    <property type="method" value="EM"/>
    <property type="resolution" value="2.70 A"/>
    <property type="chains" value="L=1-613"/>
</dbReference>
<dbReference type="PDB" id="7P7K">
    <property type="method" value="EM"/>
    <property type="resolution" value="3.10 A"/>
    <property type="chains" value="L=1-613"/>
</dbReference>
<dbReference type="PDB" id="7P7L">
    <property type="method" value="EM"/>
    <property type="resolution" value="3.00 A"/>
    <property type="chains" value="L=1-613"/>
</dbReference>
<dbReference type="PDB" id="7P7M">
    <property type="method" value="EM"/>
    <property type="resolution" value="3.20 A"/>
    <property type="chains" value="L=1-613"/>
</dbReference>
<dbReference type="PDB" id="7Z7R">
    <property type="method" value="EM"/>
    <property type="resolution" value="3.36 A"/>
    <property type="chains" value="L=1-613"/>
</dbReference>
<dbReference type="PDB" id="7Z7S">
    <property type="method" value="EM"/>
    <property type="resolution" value="2.40 A"/>
    <property type="chains" value="L=1-613"/>
</dbReference>
<dbReference type="PDB" id="7Z7T">
    <property type="method" value="EM"/>
    <property type="resolution" value="3.10 A"/>
    <property type="chains" value="L=1-613"/>
</dbReference>
<dbReference type="PDB" id="7Z7V">
    <property type="method" value="EM"/>
    <property type="resolution" value="2.29 A"/>
    <property type="chains" value="L=1-613"/>
</dbReference>
<dbReference type="PDB" id="7Z80">
    <property type="method" value="EM"/>
    <property type="resolution" value="2.93 A"/>
    <property type="chains" value="L=1-613"/>
</dbReference>
<dbReference type="PDB" id="7Z83">
    <property type="method" value="EM"/>
    <property type="resolution" value="2.88 A"/>
    <property type="chains" value="L=1-613"/>
</dbReference>
<dbReference type="PDB" id="7Z84">
    <property type="method" value="EM"/>
    <property type="resolution" value="2.87 A"/>
    <property type="chains" value="L=1-613"/>
</dbReference>
<dbReference type="PDB" id="7ZC5">
    <property type="method" value="EM"/>
    <property type="resolution" value="3.00 A"/>
    <property type="chains" value="L=1-613"/>
</dbReference>
<dbReference type="PDB" id="7ZCI">
    <property type="method" value="EM"/>
    <property type="resolution" value="2.69 A"/>
    <property type="chains" value="L=1-613"/>
</dbReference>
<dbReference type="PDBsum" id="7NYH"/>
<dbReference type="PDBsum" id="7NYR"/>
<dbReference type="PDBsum" id="7NYU"/>
<dbReference type="PDBsum" id="7NYV"/>
<dbReference type="PDBsum" id="7P61"/>
<dbReference type="PDBsum" id="7P62"/>
<dbReference type="PDBsum" id="7P63"/>
<dbReference type="PDBsum" id="7P64"/>
<dbReference type="PDBsum" id="7P69"/>
<dbReference type="PDBsum" id="7P7C"/>
<dbReference type="PDBsum" id="7P7E"/>
<dbReference type="PDBsum" id="7P7J"/>
<dbReference type="PDBsum" id="7P7K"/>
<dbReference type="PDBsum" id="7P7L"/>
<dbReference type="PDBsum" id="7P7M"/>
<dbReference type="PDBsum" id="7Z7R"/>
<dbReference type="PDBsum" id="7Z7S"/>
<dbReference type="PDBsum" id="7Z7T"/>
<dbReference type="PDBsum" id="7Z7V"/>
<dbReference type="PDBsum" id="7Z80"/>
<dbReference type="PDBsum" id="7Z83"/>
<dbReference type="PDBsum" id="7Z84"/>
<dbReference type="PDBsum" id="7ZC5"/>
<dbReference type="PDBsum" id="7ZCI"/>
<dbReference type="EMDB" id="EMD-12653"/>
<dbReference type="EMDB" id="EMD-12654"/>
<dbReference type="EMDB" id="EMD-12655"/>
<dbReference type="SMR" id="P33607"/>
<dbReference type="BioGRID" id="4260888">
    <property type="interactions" value="94"/>
</dbReference>
<dbReference type="ComplexPortal" id="CPX-243">
    <property type="entry name" value="Respiratory chain complex I"/>
</dbReference>
<dbReference type="DIP" id="DIP-10388N"/>
<dbReference type="FunCoup" id="P33607">
    <property type="interactions" value="345"/>
</dbReference>
<dbReference type="IntAct" id="P33607">
    <property type="interactions" value="1"/>
</dbReference>
<dbReference type="STRING" id="511145.b2278"/>
<dbReference type="TCDB" id="3.D.1.1.1">
    <property type="family name" value="the h+ or na+-translocating nadh dehydrogenase (ndh) family"/>
</dbReference>
<dbReference type="jPOST" id="P33607"/>
<dbReference type="PaxDb" id="511145-b2278"/>
<dbReference type="EnsemblBacteria" id="AAC75338">
    <property type="protein sequence ID" value="AAC75338"/>
    <property type="gene ID" value="b2278"/>
</dbReference>
<dbReference type="GeneID" id="945540"/>
<dbReference type="KEGG" id="ecj:JW2273"/>
<dbReference type="KEGG" id="eco:b2278"/>
<dbReference type="KEGG" id="ecoc:C3026_12715"/>
<dbReference type="PATRIC" id="fig|1411691.4.peg.4458"/>
<dbReference type="EchoBASE" id="EB2016"/>
<dbReference type="eggNOG" id="COG1009">
    <property type="taxonomic scope" value="Bacteria"/>
</dbReference>
<dbReference type="HOGENOM" id="CLU_007100_6_2_6"/>
<dbReference type="InParanoid" id="P33607"/>
<dbReference type="OMA" id="LIGFWQH"/>
<dbReference type="OrthoDB" id="9811798at2"/>
<dbReference type="PhylomeDB" id="P33607"/>
<dbReference type="BioCyc" id="EcoCyc:NUOL-MONOMER"/>
<dbReference type="BioCyc" id="MetaCyc:NUOL-MONOMER"/>
<dbReference type="PRO" id="PR:P33607"/>
<dbReference type="Proteomes" id="UP000000625">
    <property type="component" value="Chromosome"/>
</dbReference>
<dbReference type="GO" id="GO:0016020">
    <property type="term" value="C:membrane"/>
    <property type="evidence" value="ECO:0000314"/>
    <property type="project" value="ComplexPortal"/>
</dbReference>
<dbReference type="GO" id="GO:0030964">
    <property type="term" value="C:NADH dehydrogenase complex"/>
    <property type="evidence" value="ECO:0000314"/>
    <property type="project" value="EcoliWiki"/>
</dbReference>
<dbReference type="GO" id="GO:0005886">
    <property type="term" value="C:plasma membrane"/>
    <property type="evidence" value="ECO:0000314"/>
    <property type="project" value="EcoCyc"/>
</dbReference>
<dbReference type="GO" id="GO:0045271">
    <property type="term" value="C:respiratory chain complex I"/>
    <property type="evidence" value="ECO:0000314"/>
    <property type="project" value="EcoCyc"/>
</dbReference>
<dbReference type="GO" id="GO:0008137">
    <property type="term" value="F:NADH dehydrogenase (ubiquinone) activity"/>
    <property type="evidence" value="ECO:0007669"/>
    <property type="project" value="InterPro"/>
</dbReference>
<dbReference type="GO" id="GO:0048038">
    <property type="term" value="F:quinone binding"/>
    <property type="evidence" value="ECO:0007669"/>
    <property type="project" value="UniProtKB-KW"/>
</dbReference>
<dbReference type="GO" id="GO:0042773">
    <property type="term" value="P:ATP synthesis coupled electron transport"/>
    <property type="evidence" value="ECO:0007669"/>
    <property type="project" value="InterPro"/>
</dbReference>
<dbReference type="GO" id="GO:0015990">
    <property type="term" value="P:electron transport coupled proton transport"/>
    <property type="evidence" value="ECO:0000315"/>
    <property type="project" value="EcoCyc"/>
</dbReference>
<dbReference type="GO" id="GO:0022904">
    <property type="term" value="P:respiratory electron transport chain"/>
    <property type="evidence" value="ECO:0000314"/>
    <property type="project" value="ComplexPortal"/>
</dbReference>
<dbReference type="FunFam" id="1.20.5.2700:FF:000001">
    <property type="entry name" value="NADH-quinone oxidoreductase, L subunit"/>
    <property type="match status" value="1"/>
</dbReference>
<dbReference type="Gene3D" id="1.20.5.2700">
    <property type="match status" value="1"/>
</dbReference>
<dbReference type="InterPro" id="IPR018393">
    <property type="entry name" value="NADHpl_OxRdtase_5_subgr"/>
</dbReference>
<dbReference type="InterPro" id="IPR001750">
    <property type="entry name" value="ND/Mrp_TM"/>
</dbReference>
<dbReference type="InterPro" id="IPR003945">
    <property type="entry name" value="NU5C-like"/>
</dbReference>
<dbReference type="InterPro" id="IPR001516">
    <property type="entry name" value="Proton_antipo_N"/>
</dbReference>
<dbReference type="NCBIfam" id="TIGR01974">
    <property type="entry name" value="NDH_I_L"/>
    <property type="match status" value="1"/>
</dbReference>
<dbReference type="NCBIfam" id="NF005141">
    <property type="entry name" value="PRK06590.1"/>
    <property type="match status" value="1"/>
</dbReference>
<dbReference type="PANTHER" id="PTHR42829">
    <property type="entry name" value="NADH-UBIQUINONE OXIDOREDUCTASE CHAIN 5"/>
    <property type="match status" value="1"/>
</dbReference>
<dbReference type="PANTHER" id="PTHR42829:SF2">
    <property type="entry name" value="NADH-UBIQUINONE OXIDOREDUCTASE CHAIN 5"/>
    <property type="match status" value="1"/>
</dbReference>
<dbReference type="Pfam" id="PF00361">
    <property type="entry name" value="Proton_antipo_M"/>
    <property type="match status" value="1"/>
</dbReference>
<dbReference type="Pfam" id="PF00662">
    <property type="entry name" value="Proton_antipo_N"/>
    <property type="match status" value="1"/>
</dbReference>
<dbReference type="PRINTS" id="PR01434">
    <property type="entry name" value="NADHDHGNASE5"/>
</dbReference>
<dbReference type="PRINTS" id="PR01435">
    <property type="entry name" value="NPOXDRDTASE5"/>
</dbReference>
<reference key="1">
    <citation type="journal article" date="1993" name="J. Mol. Biol.">
        <title>The gene locus of the proton-translocating NADH: ubiquinone oxidoreductase in Escherichia coli. Organization of the 14 genes and relationship between the derived proteins and subunits of mitochondrial complex I.</title>
        <authorList>
            <person name="Weidner U."/>
            <person name="Geier S."/>
            <person name="Ptock A."/>
            <person name="Friedrich T."/>
            <person name="Leif H."/>
            <person name="Weiss H."/>
        </authorList>
    </citation>
    <scope>NUCLEOTIDE SEQUENCE [GENOMIC DNA]</scope>
    <source>
        <strain>K12 / AN387</strain>
    </source>
</reference>
<reference key="2">
    <citation type="journal article" date="1997" name="DNA Res.">
        <title>Construction of a contiguous 874-kb sequence of the Escherichia coli-K12 genome corresponding to 50.0-68.8 min on the linkage map and analysis of its sequence features.</title>
        <authorList>
            <person name="Yamamoto Y."/>
            <person name="Aiba H."/>
            <person name="Baba T."/>
            <person name="Hayashi K."/>
            <person name="Inada T."/>
            <person name="Isono K."/>
            <person name="Itoh T."/>
            <person name="Kimura S."/>
            <person name="Kitagawa M."/>
            <person name="Makino K."/>
            <person name="Miki T."/>
            <person name="Mitsuhashi N."/>
            <person name="Mizobuchi K."/>
            <person name="Mori H."/>
            <person name="Nakade S."/>
            <person name="Nakamura Y."/>
            <person name="Nashimoto H."/>
            <person name="Oshima T."/>
            <person name="Oyama S."/>
            <person name="Saito N."/>
            <person name="Sampei G."/>
            <person name="Satoh Y."/>
            <person name="Sivasundaram S."/>
            <person name="Tagami H."/>
            <person name="Takahashi H."/>
            <person name="Takeda J."/>
            <person name="Takemoto K."/>
            <person name="Uehara K."/>
            <person name="Wada C."/>
            <person name="Yamagata S."/>
            <person name="Horiuchi T."/>
        </authorList>
    </citation>
    <scope>NUCLEOTIDE SEQUENCE [LARGE SCALE GENOMIC DNA]</scope>
    <source>
        <strain>K12 / W3110 / ATCC 27325 / DSM 5911</strain>
    </source>
</reference>
<reference key="3">
    <citation type="journal article" date="1997" name="Science">
        <title>The complete genome sequence of Escherichia coli K-12.</title>
        <authorList>
            <person name="Blattner F.R."/>
            <person name="Plunkett G. III"/>
            <person name="Bloch C.A."/>
            <person name="Perna N.T."/>
            <person name="Burland V."/>
            <person name="Riley M."/>
            <person name="Collado-Vides J."/>
            <person name="Glasner J.D."/>
            <person name="Rode C.K."/>
            <person name="Mayhew G.F."/>
            <person name="Gregor J."/>
            <person name="Davis N.W."/>
            <person name="Kirkpatrick H.A."/>
            <person name="Goeden M.A."/>
            <person name="Rose D.J."/>
            <person name="Mau B."/>
            <person name="Shao Y."/>
        </authorList>
    </citation>
    <scope>NUCLEOTIDE SEQUENCE [LARGE SCALE GENOMIC DNA]</scope>
    <source>
        <strain>K12 / MG1655 / ATCC 47076</strain>
    </source>
</reference>
<reference key="4">
    <citation type="journal article" date="2006" name="Mol. Syst. Biol.">
        <title>Highly accurate genome sequences of Escherichia coli K-12 strains MG1655 and W3110.</title>
        <authorList>
            <person name="Hayashi K."/>
            <person name="Morooka N."/>
            <person name="Yamamoto Y."/>
            <person name="Fujita K."/>
            <person name="Isono K."/>
            <person name="Choi S."/>
            <person name="Ohtsubo E."/>
            <person name="Baba T."/>
            <person name="Wanner B.L."/>
            <person name="Mori H."/>
            <person name="Horiuchi T."/>
        </authorList>
    </citation>
    <scope>NUCLEOTIDE SEQUENCE [LARGE SCALE GENOMIC DNA]</scope>
    <source>
        <strain>K12 / W3110 / ATCC 27325 / DSM 5911</strain>
    </source>
</reference>
<reference key="5">
    <citation type="journal article" date="2005" name="Science">
        <title>Global topology analysis of the Escherichia coli inner membrane proteome.</title>
        <authorList>
            <person name="Daley D.O."/>
            <person name="Rapp M."/>
            <person name="Granseth E."/>
            <person name="Melen K."/>
            <person name="Drew D."/>
            <person name="von Heijne G."/>
        </authorList>
    </citation>
    <scope>TOPOLOGY [LARGE SCALE ANALYSIS]</scope>
    <source>
        <strain>K12 / MG1655 / ATCC 47076</strain>
    </source>
</reference>
<name>NUOL_ECOLI</name>
<sequence length="613" mass="66438">MNMLALTIILPLIGFVLLAFSRGRWSENVSAIVGVGSVGLAALVTAFIGVDFFANGEQTYSQPLWTWMSVGDFNIGFNLVLDGLSLTMLSVVTGVGFLIHMYASWYMRGEEGYSRFFAYTNLFIASMVVLVLADNLLLMYLGWEGVGLCSYLLIGFYYTDPKNGAAAMKAFVVTRVGDVFLAFALFILYNELGTLNFREMVELAPAHFADGNNMLMWATLMLLGGAVGKSAQLPLQTWLADAMAGPTPVSALIHAATMVTAGVYLIARTHGLFLMTPEVLHLVGIVGAVTLLLAGFAALVQTDIKRVLAYSTMSQIGYMFLALGVQAWDAAIFHLMTHAFFKALLFLASGSVILACHHEQNIFKMGGLRKSIPLVYLCFLVGGAALSALPLVTAGFFSKDEILAGAMANGHINLMVAGLVGAFMTSLYTFRMIFIVFHGKEQIHAHAVKGVTHSLPLIVLLILSTFVGALIVPPLQGVLPQTTELAHGSMLTLEITSGVVAVVGILLAAWLWLGKRTLVTSIANSAPGRLLGTWWYNAWGFDWLYDKVFVKPFLGIAWLLKRDPLNSMMNIPAVLSRFAGKGLLLSENGYLRWYVASMSIGAVVVLALLMVLR</sequence>